<keyword id="KW-0002">3D-structure</keyword>
<keyword id="KW-0067">ATP-binding</keyword>
<keyword id="KW-0436">Ligase</keyword>
<keyword id="KW-0547">Nucleotide-binding</keyword>
<keyword id="KW-1185">Reference proteome</keyword>
<dbReference type="EC" id="6.3.2.-" evidence="3 4"/>
<dbReference type="EMBL" id="AE017334">
    <property type="protein sequence ID" value="AAT31101.2"/>
    <property type="molecule type" value="Genomic_DNA"/>
</dbReference>
<dbReference type="RefSeq" id="WP_011053144.1">
    <property type="nucleotide sequence ID" value="NZ_WXXJ01000029.1"/>
</dbReference>
<dbReference type="PDB" id="3TO3">
    <property type="method" value="X-ray"/>
    <property type="resolution" value="2.38 A"/>
    <property type="chains" value="A/B=3-612"/>
</dbReference>
<dbReference type="PDBsum" id="3TO3"/>
<dbReference type="SMR" id="Q81RQ8"/>
<dbReference type="DNASU" id="1083942"/>
<dbReference type="GeneID" id="45021904"/>
<dbReference type="KEGG" id="bar:GBAA_1982"/>
<dbReference type="PATRIC" id="fig|1392.230.peg.1942"/>
<dbReference type="HOGENOM" id="CLU_018524_0_1_9"/>
<dbReference type="OrthoDB" id="495728at2"/>
<dbReference type="BioCyc" id="MetaCyc:MONOMER-14941"/>
<dbReference type="UniPathway" id="UPA01005"/>
<dbReference type="EvolutionaryTrace" id="Q81RQ8"/>
<dbReference type="Proteomes" id="UP000000594">
    <property type="component" value="Chromosome"/>
</dbReference>
<dbReference type="GO" id="GO:0016881">
    <property type="term" value="F:acid-amino acid ligase activity"/>
    <property type="evidence" value="ECO:0007669"/>
    <property type="project" value="UniProtKB-ARBA"/>
</dbReference>
<dbReference type="GO" id="GO:0005524">
    <property type="term" value="F:ATP binding"/>
    <property type="evidence" value="ECO:0007669"/>
    <property type="project" value="UniProtKB-KW"/>
</dbReference>
<dbReference type="GO" id="GO:0019290">
    <property type="term" value="P:siderophore biosynthetic process"/>
    <property type="evidence" value="ECO:0007669"/>
    <property type="project" value="InterPro"/>
</dbReference>
<dbReference type="FunFam" id="1.10.510.40:FF:000007">
    <property type="entry name" value="Siderophore biosynthesis protein"/>
    <property type="match status" value="1"/>
</dbReference>
<dbReference type="FunFam" id="3.30.310.280:FF:000002">
    <property type="entry name" value="Siderophore biosynthesis protein"/>
    <property type="match status" value="1"/>
</dbReference>
<dbReference type="Gene3D" id="1.10.510.40">
    <property type="match status" value="1"/>
</dbReference>
<dbReference type="Gene3D" id="3.30.310.280">
    <property type="match status" value="1"/>
</dbReference>
<dbReference type="Gene3D" id="6.10.250.3370">
    <property type="match status" value="1"/>
</dbReference>
<dbReference type="InterPro" id="IPR007310">
    <property type="entry name" value="Aerobactin_biosyn_IucA/IucC_N"/>
</dbReference>
<dbReference type="InterPro" id="IPR022770">
    <property type="entry name" value="IucA/IucC-like_C"/>
</dbReference>
<dbReference type="InterPro" id="IPR037455">
    <property type="entry name" value="LucA/IucC-like"/>
</dbReference>
<dbReference type="PANTHER" id="PTHR34384">
    <property type="entry name" value="L-2,3-DIAMINOPROPANOATE--CITRATE LIGASE"/>
    <property type="match status" value="1"/>
</dbReference>
<dbReference type="PANTHER" id="PTHR34384:SF6">
    <property type="entry name" value="STAPHYLOFERRIN B SYNTHASE"/>
    <property type="match status" value="1"/>
</dbReference>
<dbReference type="Pfam" id="PF06276">
    <property type="entry name" value="FhuF"/>
    <property type="match status" value="1"/>
</dbReference>
<dbReference type="Pfam" id="PF04183">
    <property type="entry name" value="IucA_IucC"/>
    <property type="match status" value="1"/>
</dbReference>
<accession>Q81RQ8</accession>
<accession>E9QRE2</accession>
<accession>Q6KTW4</accession>
<reference key="1">
    <citation type="journal article" date="2009" name="J. Bacteriol.">
        <title>The complete genome sequence of Bacillus anthracis Ames 'Ancestor'.</title>
        <authorList>
            <person name="Ravel J."/>
            <person name="Jiang L."/>
            <person name="Stanley S.T."/>
            <person name="Wilson M.R."/>
            <person name="Decker R.S."/>
            <person name="Read T.D."/>
            <person name="Worsham P."/>
            <person name="Keim P.S."/>
            <person name="Salzberg S.L."/>
            <person name="Fraser-Liggett C.M."/>
            <person name="Rasko D.A."/>
        </authorList>
    </citation>
    <scope>NUCLEOTIDE SEQUENCE [LARGE SCALE GENOMIC DNA]</scope>
    <source>
        <strain>Ames ancestor</strain>
    </source>
</reference>
<reference key="2">
    <citation type="journal article" date="2004" name="Mol. Microbiol.">
        <title>Bacillus anthracis requires siderophore biosynthesis for growth in macrophages and mouse virulence.</title>
        <authorList>
            <person name="Cendrowski S."/>
            <person name="MacArthur W."/>
            <person name="Hanna P."/>
        </authorList>
    </citation>
    <scope>GENE NAME</scope>
    <source>
        <strain>Sterne</strain>
    </source>
</reference>
<reference key="3">
    <citation type="journal article" date="2006" name="Biochem. Biophys. Res. Commun.">
        <title>Siderophores of Bacillus anthracis, Bacillus cereus, and Bacillus thuringiensis.</title>
        <authorList>
            <person name="Wilson M.K."/>
            <person name="Abergel R.J."/>
            <person name="Raymond K.N."/>
            <person name="Arceneaux J.E."/>
            <person name="Byers B.R."/>
        </authorList>
    </citation>
    <scope>FUNCTION</scope>
    <source>
        <strain>Sterne</strain>
    </source>
</reference>
<reference key="4">
    <citation type="journal article" date="2007" name="J. Bacteriol.">
        <title>Biosynthetic analysis of the petrobactin siderophore pathway from Bacillus anthracis.</title>
        <authorList>
            <person name="Lee J.Y."/>
            <person name="Janes B.K."/>
            <person name="Passalacqua K.D."/>
            <person name="Pfleger B.F."/>
            <person name="Bergman N.H."/>
            <person name="Liu H."/>
            <person name="Haakansson K."/>
            <person name="Somu R.V."/>
            <person name="Aldrich C.C."/>
            <person name="Cendrowski S."/>
            <person name="Hanna P.C."/>
            <person name="Sherman D.H."/>
        </authorList>
    </citation>
    <scope>FUNCTION</scope>
    <scope>PATHWAY</scope>
    <scope>DISRUPTION PHENOTYPE</scope>
    <source>
        <strain>Sterne</strain>
    </source>
</reference>
<reference key="5">
    <citation type="journal article" date="2008" name="Chem. Commun. (Camb.)">
        <title>Petrobactin biosynthesis: AsbB catalyzes condensation of spermidine with N8-citryl-spermidine and its N1-(3,4-dihydroxybenzoyl) derivative.</title>
        <authorList>
            <person name="Oves-Costales D."/>
            <person name="Kadi N."/>
            <person name="Fogg M.J."/>
            <person name="Song L."/>
            <person name="Wilson K.S."/>
            <person name="Challis G.L."/>
        </authorList>
    </citation>
    <scope>FUNCTION</scope>
    <scope>CATALYTIC ACTIVITY</scope>
    <scope>PATHWAY</scope>
</reference>
<reference key="6">
    <citation type="journal article" date="2016" name="Mol. Microbiol.">
        <title>Flying under the radar: The non-canonical biochemistry and molecular biology of petrobactin from Bacillus anthracis.</title>
        <authorList>
            <person name="Hagan A.K."/>
            <person name="Carlson P.E. Jr."/>
            <person name="Hanna P.C."/>
        </authorList>
    </citation>
    <scope>REVIEW</scope>
</reference>
<reference evidence="8" key="7">
    <citation type="journal article" date="2012" name="J. Biol. Chem.">
        <title>Functional and structural analysis of the siderophore synthetase AsbB through reconstitution of the petrobactin biosynthetic pathway from Bacillus anthracis.</title>
        <authorList>
            <person name="Nusca T.D."/>
            <person name="Kim Y."/>
            <person name="Maltseva N."/>
            <person name="Lee J.Y."/>
            <person name="Eschenfeldt W."/>
            <person name="Stols L."/>
            <person name="Schofield M.M."/>
            <person name="Scaglione J.B."/>
            <person name="Dixon S.D."/>
            <person name="Oves-Costales D."/>
            <person name="Challis G.L."/>
            <person name="Hanna P.C."/>
            <person name="Pfleger B.F."/>
            <person name="Joachimiak A."/>
            <person name="Sherman D.H."/>
        </authorList>
    </citation>
    <scope>X-RAY CRYSTALLOGRAPHY (2.38 ANGSTROMS) OF 3-612 IN COMPLEX WITH ATP</scope>
    <scope>FUNCTION</scope>
    <scope>CATALYTIC ACTIVITY</scope>
    <scope>SUBUNIT</scope>
    <scope>PATHWAY</scope>
    <scope>MUTAGENESIS OF LYS-313 AND GLU-461</scope>
    <source>
        <strain>Sterne</strain>
    </source>
</reference>
<sequence>MRMDMYHTKILKAIESEDYISVRRRVLRQLVESLIYEGIITPARIEKEEQILFLIQGLDEDNKSVTYECYGRERITFGRISIDSLIVRVQDGKQEIQSVAQFLEEVFRVVNVEQTKLDSFIHELEQTIFKDTIAQYERCNKLKYTQKSYDELENHLIDGHPYHPSYKARIGFQYRDNFRYGYEFMRPIKLIWIAAHKKNATVGYENEVIYDKILKSEVGERKLEAYKERIHSMGCDPKQYLFIPVHPWQWENFIISNYAEDIQDKGIIYLGESADDYCAQQSMRTLRNVTNPKRPYVKVSLNILNTSTLRTLKPYSVASAPAISNWLSNVVSQDSYLRDESRVILLKEFSSVMYDTNKKATYGSLGCIWRESVHHYLGEQEDAVPFNGLYAKEKDGTPIIDAWLNKYGIENWLRLLIQKAIIPVIHLVVEHGIALESHGQNMILVHKEGLPVRIALKDFHEGLEFYRPFLKEMNKCPDFTKMHKTYANGKMNDFFEMDRIECLQEMVLDALFLFNVGELAFVLADKYEWKEESFWMIVVEEIENHFRKYPHLKDRFESIQLYTPTFYAEQLTKRRLYIDVESLVHEVPNPLYRARQLNIQKSVATGGNYANC</sequence>
<name>ASBB_BACAN</name>
<feature type="chain" id="PRO_0000450624" description="Citryl-spermidine/3,4-dihydroxybenzoyl-citryl-spermidine:spermidine ligase">
    <location>
        <begin position="1"/>
        <end position="612"/>
    </location>
</feature>
<feature type="binding site" evidence="4 8">
    <location>
        <begin position="282"/>
        <end position="284"/>
    </location>
    <ligand>
        <name>ATP</name>
        <dbReference type="ChEBI" id="CHEBI:30616"/>
    </ligand>
</feature>
<feature type="binding site" evidence="4 8">
    <location>
        <position position="298"/>
    </location>
    <ligand>
        <name>ATP</name>
        <dbReference type="ChEBI" id="CHEBI:30616"/>
    </ligand>
</feature>
<feature type="binding site" evidence="4 8">
    <location>
        <position position="310"/>
    </location>
    <ligand>
        <name>ATP</name>
        <dbReference type="ChEBI" id="CHEBI:30616"/>
    </ligand>
</feature>
<feature type="binding site" evidence="4 8">
    <location>
        <position position="390"/>
    </location>
    <ligand>
        <name>ATP</name>
        <dbReference type="ChEBI" id="CHEBI:30616"/>
    </ligand>
</feature>
<feature type="binding site" evidence="4 8">
    <location>
        <position position="461"/>
    </location>
    <ligand>
        <name>ATP</name>
        <dbReference type="ChEBI" id="CHEBI:30616"/>
    </ligand>
</feature>
<feature type="mutagenesis site" description="Preference for spermidine is not completely abrogated, but activity is increased with unnatural nucleophiles such as spermine, l,8-diaminooctane and cadaverine." evidence="4">
    <original>K</original>
    <variation>A</variation>
    <location>
        <position position="313"/>
    </location>
</feature>
<feature type="mutagenesis site" description="Increases acceptance of polyamines lacking a secondary amine." evidence="4">
    <original>K</original>
    <variation>M</variation>
    <location>
        <position position="313"/>
    </location>
</feature>
<feature type="mutagenesis site" description="Increases relative acceptance of spermine, norspermidine and 1-aminoethyl-1,3-propanediamine." evidence="4">
    <original>E</original>
    <variation>A</variation>
    <location>
        <position position="461"/>
    </location>
</feature>
<feature type="mutagenesis site" description="Displays selectivity close to that of wild type." evidence="4">
    <original>E</original>
    <variation>D</variation>
    <location>
        <position position="461"/>
    </location>
</feature>
<feature type="helix" evidence="9">
    <location>
        <begin position="5"/>
        <end position="15"/>
    </location>
</feature>
<feature type="helix" evidence="9">
    <location>
        <begin position="17"/>
        <end position="36"/>
    </location>
</feature>
<feature type="strand" evidence="9">
    <location>
        <begin position="43"/>
        <end position="46"/>
    </location>
</feature>
<feature type="strand" evidence="9">
    <location>
        <begin position="51"/>
        <end position="58"/>
    </location>
</feature>
<feature type="strand" evidence="9">
    <location>
        <begin position="64"/>
        <end position="73"/>
    </location>
</feature>
<feature type="turn" evidence="9">
    <location>
        <begin position="75"/>
        <end position="78"/>
    </location>
</feature>
<feature type="strand" evidence="9">
    <location>
        <begin position="80"/>
        <end position="82"/>
    </location>
</feature>
<feature type="strand" evidence="9">
    <location>
        <begin position="87"/>
        <end position="95"/>
    </location>
</feature>
<feature type="helix" evidence="9">
    <location>
        <begin position="99"/>
        <end position="106"/>
    </location>
</feature>
<feature type="turn" evidence="9">
    <location>
        <begin position="107"/>
        <end position="109"/>
    </location>
</feature>
<feature type="helix" evidence="9">
    <location>
        <begin position="114"/>
        <end position="137"/>
    </location>
</feature>
<feature type="helix" evidence="9">
    <location>
        <begin position="149"/>
        <end position="155"/>
    </location>
</feature>
<feature type="helix" evidence="9">
    <location>
        <begin position="174"/>
        <end position="180"/>
    </location>
</feature>
<feature type="helix" evidence="9">
    <location>
        <begin position="182"/>
        <end position="184"/>
    </location>
</feature>
<feature type="strand" evidence="9">
    <location>
        <begin position="191"/>
        <end position="196"/>
    </location>
</feature>
<feature type="turn" evidence="9">
    <location>
        <begin position="197"/>
        <end position="199"/>
    </location>
</feature>
<feature type="strand" evidence="9">
    <location>
        <begin position="200"/>
        <end position="203"/>
    </location>
</feature>
<feature type="helix" evidence="9">
    <location>
        <begin position="207"/>
        <end position="218"/>
    </location>
</feature>
<feature type="helix" evidence="9">
    <location>
        <begin position="220"/>
        <end position="232"/>
    </location>
</feature>
<feature type="helix" evidence="9">
    <location>
        <begin position="237"/>
        <end position="239"/>
    </location>
</feature>
<feature type="strand" evidence="9">
    <location>
        <begin position="240"/>
        <end position="245"/>
    </location>
</feature>
<feature type="helix" evidence="9">
    <location>
        <begin position="247"/>
        <end position="252"/>
    </location>
</feature>
<feature type="helix" evidence="9">
    <location>
        <begin position="254"/>
        <end position="257"/>
    </location>
</feature>
<feature type="helix" evidence="9">
    <location>
        <begin position="259"/>
        <end position="263"/>
    </location>
</feature>
<feature type="strand" evidence="9">
    <location>
        <begin position="266"/>
        <end position="272"/>
    </location>
</feature>
<feature type="strand" evidence="9">
    <location>
        <begin position="277"/>
        <end position="279"/>
    </location>
</feature>
<feature type="strand" evidence="9">
    <location>
        <begin position="283"/>
        <end position="290"/>
    </location>
</feature>
<feature type="strand" evidence="9">
    <location>
        <begin position="296"/>
        <end position="299"/>
    </location>
</feature>
<feature type="strand" evidence="9">
    <location>
        <begin position="301"/>
        <end position="305"/>
    </location>
</feature>
<feature type="strand" evidence="9">
    <location>
        <begin position="308"/>
        <end position="310"/>
    </location>
</feature>
<feature type="helix" evidence="9">
    <location>
        <begin position="314"/>
        <end position="332"/>
    </location>
</feature>
<feature type="helix" evidence="9">
    <location>
        <begin position="335"/>
        <end position="339"/>
    </location>
</feature>
<feature type="strand" evidence="9">
    <location>
        <begin position="348"/>
        <end position="354"/>
    </location>
</feature>
<feature type="turn" evidence="9">
    <location>
        <begin position="360"/>
        <end position="363"/>
    </location>
</feature>
<feature type="strand" evidence="9">
    <location>
        <begin position="365"/>
        <end position="370"/>
    </location>
</feature>
<feature type="turn" evidence="9">
    <location>
        <begin position="373"/>
        <end position="376"/>
    </location>
</feature>
<feature type="strand" evidence="9">
    <location>
        <begin position="382"/>
        <end position="385"/>
    </location>
</feature>
<feature type="helix" evidence="9">
    <location>
        <begin position="386"/>
        <end position="390"/>
    </location>
</feature>
<feature type="helix" evidence="9">
    <location>
        <begin position="401"/>
        <end position="407"/>
    </location>
</feature>
<feature type="helix" evidence="9">
    <location>
        <begin position="409"/>
        <end position="431"/>
    </location>
</feature>
<feature type="helix" evidence="9">
    <location>
        <begin position="439"/>
        <end position="441"/>
    </location>
</feature>
<feature type="strand" evidence="9">
    <location>
        <begin position="442"/>
        <end position="447"/>
    </location>
</feature>
<feature type="strand" evidence="9">
    <location>
        <begin position="450"/>
        <end position="456"/>
    </location>
</feature>
<feature type="helix" evidence="9">
    <location>
        <begin position="459"/>
        <end position="462"/>
    </location>
</feature>
<feature type="strand" evidence="9">
    <location>
        <begin position="464"/>
        <end position="466"/>
    </location>
</feature>
<feature type="helix" evidence="9">
    <location>
        <begin position="467"/>
        <end position="469"/>
    </location>
</feature>
<feature type="helix" evidence="9">
    <location>
        <begin position="479"/>
        <end position="481"/>
    </location>
</feature>
<feature type="helix" evidence="9">
    <location>
        <begin position="484"/>
        <end position="488"/>
    </location>
</feature>
<feature type="strand" evidence="9">
    <location>
        <begin position="493"/>
        <end position="499"/>
    </location>
</feature>
<feature type="helix" evidence="9">
    <location>
        <begin position="501"/>
        <end position="508"/>
    </location>
</feature>
<feature type="helix" evidence="9">
    <location>
        <begin position="509"/>
        <end position="515"/>
    </location>
</feature>
<feature type="helix" evidence="9">
    <location>
        <begin position="516"/>
        <end position="527"/>
    </location>
</feature>
<feature type="helix" evidence="9">
    <location>
        <begin position="531"/>
        <end position="547"/>
    </location>
</feature>
<feature type="helix" evidence="9">
    <location>
        <begin position="550"/>
        <end position="552"/>
    </location>
</feature>
<feature type="helix" evidence="9">
    <location>
        <begin position="553"/>
        <end position="559"/>
    </location>
</feature>
<feature type="strand" evidence="9">
    <location>
        <begin position="564"/>
        <end position="569"/>
    </location>
</feature>
<feature type="helix" evidence="9">
    <location>
        <begin position="571"/>
        <end position="576"/>
    </location>
</feature>
<feature type="strand" evidence="9">
    <location>
        <begin position="584"/>
        <end position="588"/>
    </location>
</feature>
<feature type="helix" evidence="9">
    <location>
        <begin position="590"/>
        <end position="601"/>
    </location>
</feature>
<proteinExistence type="evidence at protein level"/>
<evidence type="ECO:0000269" key="1">
    <source>
    </source>
</evidence>
<evidence type="ECO:0000269" key="2">
    <source>
    </source>
</evidence>
<evidence type="ECO:0000269" key="3">
    <source>
    </source>
</evidence>
<evidence type="ECO:0000269" key="4">
    <source>
    </source>
</evidence>
<evidence type="ECO:0000303" key="5">
    <source>
    </source>
</evidence>
<evidence type="ECO:0000305" key="6"/>
<evidence type="ECO:0000312" key="7">
    <source>
        <dbReference type="EMBL" id="AAT31101.2"/>
    </source>
</evidence>
<evidence type="ECO:0007744" key="8">
    <source>
        <dbReference type="PDB" id="3TO3"/>
    </source>
</evidence>
<evidence type="ECO:0007829" key="9">
    <source>
        <dbReference type="PDB" id="3TO3"/>
    </source>
</evidence>
<organism>
    <name type="scientific">Bacillus anthracis</name>
    <dbReference type="NCBI Taxonomy" id="1392"/>
    <lineage>
        <taxon>Bacteria</taxon>
        <taxon>Bacillati</taxon>
        <taxon>Bacillota</taxon>
        <taxon>Bacilli</taxon>
        <taxon>Bacillales</taxon>
        <taxon>Bacillaceae</taxon>
        <taxon>Bacillus</taxon>
        <taxon>Bacillus cereus group</taxon>
    </lineage>
</organism>
<gene>
    <name evidence="5" type="primary">asbB</name>
    <name evidence="7" type="ordered locus">GBAA_1982</name>
</gene>
<protein>
    <recommendedName>
        <fullName evidence="6">Citryl-spermidine/3,4-dihydroxybenzoyl-citryl-spermidine:spermidine ligase</fullName>
        <ecNumber evidence="3 4">6.3.2.-</ecNumber>
    </recommendedName>
    <alternativeName>
        <fullName evidence="6">Petrobactin biosynthesis protein AsbB</fullName>
    </alternativeName>
</protein>
<comment type="function">
    <text evidence="1 2 3 4">Involved in the biosynthesis of petrobactin, a catecholate siderophore that functions in both iron acquisition and virulence (PubMed:16875672, PubMed:17189355, PubMed:22408253). Catalyzes the ATP-dependent condensation of spermidine with N(8)-citryl-spermidine or N(1)-(3,4-dihydroxbenzoyl)-N(8)-citryl-spermidine, two intermediates in petrobactin biosynthesis pathway (PubMed:18758617, PubMed:22408253).</text>
</comment>
<comment type="catalytic activity">
    <reaction evidence="3 4">
        <text>N(8)-citryl-spermidine + spermidine + ATP = N(8),N'(8)-citryl-bis(spermidine) + AMP + diphosphate + H(+)</text>
        <dbReference type="Rhea" id="RHEA:63812"/>
        <dbReference type="ChEBI" id="CHEBI:15378"/>
        <dbReference type="ChEBI" id="CHEBI:30616"/>
        <dbReference type="ChEBI" id="CHEBI:33019"/>
        <dbReference type="ChEBI" id="CHEBI:57834"/>
        <dbReference type="ChEBI" id="CHEBI:149586"/>
        <dbReference type="ChEBI" id="CHEBI:149592"/>
        <dbReference type="ChEBI" id="CHEBI:456215"/>
    </reaction>
</comment>
<comment type="catalytic activity">
    <reaction evidence="3 4">
        <text>N(1)-(3,4-dihydroxybenzoyl)-N(8)-citryl-spermidine + spermidine + ATP = N(1)-(3,4-dihydroxybenzoyl)-N(8),N'(8)-citryl-bis(spermidine) + AMP + diphosphate + H(+)</text>
        <dbReference type="Rhea" id="RHEA:63816"/>
        <dbReference type="ChEBI" id="CHEBI:15378"/>
        <dbReference type="ChEBI" id="CHEBI:30616"/>
        <dbReference type="ChEBI" id="CHEBI:33019"/>
        <dbReference type="ChEBI" id="CHEBI:57834"/>
        <dbReference type="ChEBI" id="CHEBI:149593"/>
        <dbReference type="ChEBI" id="CHEBI:149594"/>
        <dbReference type="ChEBI" id="CHEBI:456215"/>
    </reaction>
</comment>
<comment type="pathway">
    <text evidence="2 3 4">Siderophore biosynthesis; petrobactin biosynthesis.</text>
</comment>
<comment type="subunit">
    <text evidence="4">Homodimer.</text>
</comment>
<comment type="disruption phenotype">
    <text evidence="2">The deletion mutant cannot produce petrobactin on iron-depleted medium. In vitro analysis show that mutants grow to a very limited extent as vegetative cells in iron-depleted medium but are not able to outgrow from spores under the same culture conditions.</text>
</comment>
<comment type="similarity">
    <text evidence="6">Belongs to the IucA/IucC family.</text>
</comment>